<proteinExistence type="inferred from homology"/>
<name>DER_XANOM</name>
<sequence>MLPLVALVGRPNVGKSTIFNALTRTRDALVHDQPGVTRDRNYGVCRLDEQQPFIVVDTGGIAGDEDGLAGATARQARAAAGEADLVLFVVDGREGESSLDDEILAWLRKLARPTVLVINKIDGTDEETVRSEFARYGFSDVVALSAAHRQGIDELLEEVGARLPEEGSGELLDNDPARVRIAFVGRPNVGKSTLVNRLLGEERMIASEVPGTTRDSIAVDLERDGRQYRLIDTAGLRRRGKVEEAVEKFSAFKTLQAIERCQVAVLMLDATEGVTDQDATILGAILDAGRALVVAINKWDGQSDYQRAQAEDLLSRKLGFVSWAEAVRISALHGSGMRELFQAIHRAHASATHEFSTSEVNQALEIAYETNPPPSIRGHVSKLRYVHPGGANPPTFIVHGTRLKVLPESYKRYLENFFRKRFKLVGTPVCFIFREGANPYEGKKNPLSDRQVARKRRLMRHVKGK</sequence>
<organism>
    <name type="scientific">Xanthomonas oryzae pv. oryzae (strain MAFF 311018)</name>
    <dbReference type="NCBI Taxonomy" id="342109"/>
    <lineage>
        <taxon>Bacteria</taxon>
        <taxon>Pseudomonadati</taxon>
        <taxon>Pseudomonadota</taxon>
        <taxon>Gammaproteobacteria</taxon>
        <taxon>Lysobacterales</taxon>
        <taxon>Lysobacteraceae</taxon>
        <taxon>Xanthomonas</taxon>
    </lineage>
</organism>
<dbReference type="EMBL" id="AP008229">
    <property type="protein sequence ID" value="BAE69142.1"/>
    <property type="molecule type" value="Genomic_DNA"/>
</dbReference>
<dbReference type="RefSeq" id="WP_011259164.1">
    <property type="nucleotide sequence ID" value="NC_007705.1"/>
</dbReference>
<dbReference type="SMR" id="Q2P2T5"/>
<dbReference type="KEGG" id="xom:XOO2387"/>
<dbReference type="HOGENOM" id="CLU_016077_6_2_6"/>
<dbReference type="GO" id="GO:0016887">
    <property type="term" value="F:ATP hydrolysis activity"/>
    <property type="evidence" value="ECO:0007669"/>
    <property type="project" value="InterPro"/>
</dbReference>
<dbReference type="GO" id="GO:0005525">
    <property type="term" value="F:GTP binding"/>
    <property type="evidence" value="ECO:0007669"/>
    <property type="project" value="UniProtKB-UniRule"/>
</dbReference>
<dbReference type="GO" id="GO:0043022">
    <property type="term" value="F:ribosome binding"/>
    <property type="evidence" value="ECO:0007669"/>
    <property type="project" value="TreeGrafter"/>
</dbReference>
<dbReference type="GO" id="GO:0042254">
    <property type="term" value="P:ribosome biogenesis"/>
    <property type="evidence" value="ECO:0007669"/>
    <property type="project" value="UniProtKB-KW"/>
</dbReference>
<dbReference type="CDD" id="cd01894">
    <property type="entry name" value="EngA1"/>
    <property type="match status" value="1"/>
</dbReference>
<dbReference type="CDD" id="cd01895">
    <property type="entry name" value="EngA2"/>
    <property type="match status" value="1"/>
</dbReference>
<dbReference type="FunFam" id="3.30.300.20:FF:000004">
    <property type="entry name" value="GTPase Der"/>
    <property type="match status" value="1"/>
</dbReference>
<dbReference type="FunFam" id="3.40.50.300:FF:000040">
    <property type="entry name" value="GTPase Der"/>
    <property type="match status" value="1"/>
</dbReference>
<dbReference type="FunFam" id="3.40.50.300:FF:000057">
    <property type="entry name" value="GTPase Der"/>
    <property type="match status" value="1"/>
</dbReference>
<dbReference type="Gene3D" id="3.30.300.20">
    <property type="match status" value="1"/>
</dbReference>
<dbReference type="Gene3D" id="3.40.50.300">
    <property type="entry name" value="P-loop containing nucleotide triphosphate hydrolases"/>
    <property type="match status" value="2"/>
</dbReference>
<dbReference type="HAMAP" id="MF_00195">
    <property type="entry name" value="GTPase_Der"/>
    <property type="match status" value="1"/>
</dbReference>
<dbReference type="InterPro" id="IPR003593">
    <property type="entry name" value="AAA+_ATPase"/>
</dbReference>
<dbReference type="InterPro" id="IPR031166">
    <property type="entry name" value="G_ENGA"/>
</dbReference>
<dbReference type="InterPro" id="IPR006073">
    <property type="entry name" value="GTP-bd"/>
</dbReference>
<dbReference type="InterPro" id="IPR016484">
    <property type="entry name" value="GTPase_Der"/>
</dbReference>
<dbReference type="InterPro" id="IPR032859">
    <property type="entry name" value="KH_dom-like"/>
</dbReference>
<dbReference type="InterPro" id="IPR015946">
    <property type="entry name" value="KH_dom-like_a/b"/>
</dbReference>
<dbReference type="InterPro" id="IPR027417">
    <property type="entry name" value="P-loop_NTPase"/>
</dbReference>
<dbReference type="InterPro" id="IPR005225">
    <property type="entry name" value="Small_GTP-bd"/>
</dbReference>
<dbReference type="NCBIfam" id="TIGR03594">
    <property type="entry name" value="GTPase_EngA"/>
    <property type="match status" value="1"/>
</dbReference>
<dbReference type="NCBIfam" id="TIGR00231">
    <property type="entry name" value="small_GTP"/>
    <property type="match status" value="2"/>
</dbReference>
<dbReference type="PANTHER" id="PTHR43834">
    <property type="entry name" value="GTPASE DER"/>
    <property type="match status" value="1"/>
</dbReference>
<dbReference type="PANTHER" id="PTHR43834:SF6">
    <property type="entry name" value="GTPASE DER"/>
    <property type="match status" value="1"/>
</dbReference>
<dbReference type="Pfam" id="PF14714">
    <property type="entry name" value="KH_dom-like"/>
    <property type="match status" value="1"/>
</dbReference>
<dbReference type="Pfam" id="PF01926">
    <property type="entry name" value="MMR_HSR1"/>
    <property type="match status" value="2"/>
</dbReference>
<dbReference type="PIRSF" id="PIRSF006485">
    <property type="entry name" value="GTP-binding_EngA"/>
    <property type="match status" value="1"/>
</dbReference>
<dbReference type="PRINTS" id="PR00326">
    <property type="entry name" value="GTP1OBG"/>
</dbReference>
<dbReference type="SMART" id="SM00382">
    <property type="entry name" value="AAA"/>
    <property type="match status" value="2"/>
</dbReference>
<dbReference type="SUPFAM" id="SSF52540">
    <property type="entry name" value="P-loop containing nucleoside triphosphate hydrolases"/>
    <property type="match status" value="2"/>
</dbReference>
<dbReference type="PROSITE" id="PS51712">
    <property type="entry name" value="G_ENGA"/>
    <property type="match status" value="2"/>
</dbReference>
<protein>
    <recommendedName>
        <fullName evidence="1">GTPase Der</fullName>
    </recommendedName>
    <alternativeName>
        <fullName evidence="1">GTP-binding protein EngA</fullName>
    </alternativeName>
</protein>
<reference key="1">
    <citation type="journal article" date="2005" name="Jpn. Agric. Res. Q.">
        <title>Genome sequence of Xanthomonas oryzae pv. oryzae suggests contribution of large numbers of effector genes and insertion sequences to its race diversity.</title>
        <authorList>
            <person name="Ochiai H."/>
            <person name="Inoue Y."/>
            <person name="Takeya M."/>
            <person name="Sasaki A."/>
            <person name="Kaku H."/>
        </authorList>
    </citation>
    <scope>NUCLEOTIDE SEQUENCE [LARGE SCALE GENOMIC DNA]</scope>
    <source>
        <strain>MAFF 311018</strain>
    </source>
</reference>
<feature type="chain" id="PRO_1000011784" description="GTPase Der">
    <location>
        <begin position="1"/>
        <end position="465"/>
    </location>
</feature>
<feature type="domain" description="EngA-type G 1">
    <location>
        <begin position="3"/>
        <end position="167"/>
    </location>
</feature>
<feature type="domain" description="EngA-type G 2">
    <location>
        <begin position="179"/>
        <end position="352"/>
    </location>
</feature>
<feature type="domain" description="KH-like" evidence="1">
    <location>
        <begin position="353"/>
        <end position="437"/>
    </location>
</feature>
<feature type="binding site" evidence="1">
    <location>
        <begin position="9"/>
        <end position="16"/>
    </location>
    <ligand>
        <name>GTP</name>
        <dbReference type="ChEBI" id="CHEBI:37565"/>
        <label>1</label>
    </ligand>
</feature>
<feature type="binding site" evidence="1">
    <location>
        <begin position="57"/>
        <end position="61"/>
    </location>
    <ligand>
        <name>GTP</name>
        <dbReference type="ChEBI" id="CHEBI:37565"/>
        <label>1</label>
    </ligand>
</feature>
<feature type="binding site" evidence="1">
    <location>
        <begin position="119"/>
        <end position="122"/>
    </location>
    <ligand>
        <name>GTP</name>
        <dbReference type="ChEBI" id="CHEBI:37565"/>
        <label>1</label>
    </ligand>
</feature>
<feature type="binding site" evidence="1">
    <location>
        <begin position="185"/>
        <end position="192"/>
    </location>
    <ligand>
        <name>GTP</name>
        <dbReference type="ChEBI" id="CHEBI:37565"/>
        <label>2</label>
    </ligand>
</feature>
<feature type="binding site" evidence="1">
    <location>
        <begin position="232"/>
        <end position="236"/>
    </location>
    <ligand>
        <name>GTP</name>
        <dbReference type="ChEBI" id="CHEBI:37565"/>
        <label>2</label>
    </ligand>
</feature>
<feature type="binding site" evidence="1">
    <location>
        <begin position="297"/>
        <end position="300"/>
    </location>
    <ligand>
        <name>GTP</name>
        <dbReference type="ChEBI" id="CHEBI:37565"/>
        <label>2</label>
    </ligand>
</feature>
<evidence type="ECO:0000255" key="1">
    <source>
        <dbReference type="HAMAP-Rule" id="MF_00195"/>
    </source>
</evidence>
<accession>Q2P2T5</accession>
<comment type="function">
    <text evidence="1">GTPase that plays an essential role in the late steps of ribosome biogenesis.</text>
</comment>
<comment type="subunit">
    <text evidence="1">Associates with the 50S ribosomal subunit.</text>
</comment>
<comment type="similarity">
    <text evidence="1">Belongs to the TRAFAC class TrmE-Era-EngA-EngB-Septin-like GTPase superfamily. EngA (Der) GTPase family.</text>
</comment>
<gene>
    <name evidence="1" type="primary">der</name>
    <name type="synonym">engA</name>
    <name type="ordered locus">XOO2387</name>
</gene>
<keyword id="KW-0342">GTP-binding</keyword>
<keyword id="KW-0547">Nucleotide-binding</keyword>
<keyword id="KW-0677">Repeat</keyword>
<keyword id="KW-0690">Ribosome biogenesis</keyword>